<name>PDAD1_METAC</name>
<proteinExistence type="inferred from homology"/>
<feature type="chain" id="PRO_0000023310" description="Pyruvoyl-dependent arginine decarboxylase 1 subunit beta" evidence="1">
    <location>
        <begin position="1"/>
        <end position="44"/>
    </location>
</feature>
<feature type="chain" id="PRO_0000023311" description="Pyruvoyl-dependent arginine decarboxylase 1 subunit alpha" evidence="1">
    <location>
        <begin position="45"/>
        <end position="165"/>
    </location>
</feature>
<feature type="site" description="Cleavage (non-hydrolytic)" evidence="1">
    <location>
        <begin position="44"/>
        <end position="45"/>
    </location>
</feature>
<feature type="modified residue" description="Pyruvic acid (Ser)" evidence="1">
    <location>
        <position position="45"/>
    </location>
</feature>
<comment type="catalytic activity">
    <reaction>
        <text>L-arginine + H(+) = agmatine + CO2</text>
        <dbReference type="Rhea" id="RHEA:17641"/>
        <dbReference type="ChEBI" id="CHEBI:15378"/>
        <dbReference type="ChEBI" id="CHEBI:16526"/>
        <dbReference type="ChEBI" id="CHEBI:32682"/>
        <dbReference type="ChEBI" id="CHEBI:58145"/>
        <dbReference type="EC" id="4.1.1.19"/>
    </reaction>
</comment>
<comment type="cofactor">
    <cofactor evidence="1">
        <name>pyruvate</name>
        <dbReference type="ChEBI" id="CHEBI:15361"/>
    </cofactor>
    <text evidence="1">Binds 1 pyruvoyl group covalently per subunit.</text>
</comment>
<comment type="similarity">
    <text evidence="2">Belongs to the PdaD family.</text>
</comment>
<dbReference type="EC" id="4.1.1.19"/>
<dbReference type="EMBL" id="AE010299">
    <property type="protein sequence ID" value="AAM06385.1"/>
    <property type="molecule type" value="Genomic_DNA"/>
</dbReference>
<dbReference type="RefSeq" id="WP_011022951.1">
    <property type="nucleotide sequence ID" value="NC_003552.1"/>
</dbReference>
<dbReference type="SMR" id="Q8TLM4"/>
<dbReference type="STRING" id="188937.MA_3012"/>
<dbReference type="EnsemblBacteria" id="AAM06385">
    <property type="protein sequence ID" value="AAM06385"/>
    <property type="gene ID" value="MA_3012"/>
</dbReference>
<dbReference type="GeneID" id="1474906"/>
<dbReference type="KEGG" id="mac:MA_3012"/>
<dbReference type="HOGENOM" id="CLU_114389_0_0_2"/>
<dbReference type="InParanoid" id="Q8TLM4"/>
<dbReference type="OrthoDB" id="30748at2157"/>
<dbReference type="PhylomeDB" id="Q8TLM4"/>
<dbReference type="Proteomes" id="UP000002487">
    <property type="component" value="Chromosome"/>
</dbReference>
<dbReference type="GO" id="GO:0008792">
    <property type="term" value="F:arginine decarboxylase activity"/>
    <property type="evidence" value="ECO:0007669"/>
    <property type="project" value="UniProtKB-UniRule"/>
</dbReference>
<dbReference type="GO" id="GO:0006527">
    <property type="term" value="P:arginine catabolic process"/>
    <property type="evidence" value="ECO:0007669"/>
    <property type="project" value="InterPro"/>
</dbReference>
<dbReference type="Gene3D" id="3.30.60.30">
    <property type="match status" value="1"/>
</dbReference>
<dbReference type="Gene3D" id="3.50.20.10">
    <property type="entry name" value="Pyruvoyl-Dependent Histidine Decarboxylase, subunit B"/>
    <property type="match status" value="1"/>
</dbReference>
<dbReference type="HAMAP" id="MF_01404">
    <property type="entry name" value="PvlArgDC"/>
    <property type="match status" value="1"/>
</dbReference>
<dbReference type="InterPro" id="IPR016104">
    <property type="entry name" value="Pyr-dep_his/arg-deCO2ase"/>
</dbReference>
<dbReference type="InterPro" id="IPR016105">
    <property type="entry name" value="Pyr-dep_his/arg-deCO2ase_sand"/>
</dbReference>
<dbReference type="InterPro" id="IPR002724">
    <property type="entry name" value="Pyruvoyl-dep_arg_deCO2ase"/>
</dbReference>
<dbReference type="NCBIfam" id="NF009064">
    <property type="entry name" value="PRK12398.1"/>
    <property type="match status" value="1"/>
</dbReference>
<dbReference type="NCBIfam" id="TIGR00286">
    <property type="entry name" value="pyruvoyl-dependent arginine decarboxylase"/>
    <property type="match status" value="1"/>
</dbReference>
<dbReference type="PANTHER" id="PTHR40438">
    <property type="entry name" value="PYRUVOYL-DEPENDENT ARGININE DECARBOXYLASE"/>
    <property type="match status" value="1"/>
</dbReference>
<dbReference type="PANTHER" id="PTHR40438:SF1">
    <property type="entry name" value="PYRUVOYL-DEPENDENT ARGININE DECARBOXYLASE"/>
    <property type="match status" value="1"/>
</dbReference>
<dbReference type="Pfam" id="PF01862">
    <property type="entry name" value="PvlArgDC"/>
    <property type="match status" value="1"/>
</dbReference>
<dbReference type="PIRSF" id="PIRSF005216">
    <property type="entry name" value="Pyruvoyl-dep_arg_deCO2ase"/>
    <property type="match status" value="1"/>
</dbReference>
<dbReference type="SFLD" id="SFLDG01170">
    <property type="entry name" value="Pyruvoyl-dependent_arginine_de"/>
    <property type="match status" value="1"/>
</dbReference>
<dbReference type="SFLD" id="SFLDS00055">
    <property type="entry name" value="Pyruvoyl-Dependent_Histidine/A"/>
    <property type="match status" value="1"/>
</dbReference>
<dbReference type="SUPFAM" id="SSF56271">
    <property type="entry name" value="Pyruvoyl-dependent histidine and arginine decarboxylases"/>
    <property type="match status" value="1"/>
</dbReference>
<keyword id="KW-0210">Decarboxylase</keyword>
<keyword id="KW-0456">Lyase</keyword>
<keyword id="KW-0670">Pyruvate</keyword>
<keyword id="KW-1185">Reference proteome</keyword>
<reference key="1">
    <citation type="journal article" date="2002" name="Genome Res.">
        <title>The genome of Methanosarcina acetivorans reveals extensive metabolic and physiological diversity.</title>
        <authorList>
            <person name="Galagan J.E."/>
            <person name="Nusbaum C."/>
            <person name="Roy A."/>
            <person name="Endrizzi M.G."/>
            <person name="Macdonald P."/>
            <person name="FitzHugh W."/>
            <person name="Calvo S."/>
            <person name="Engels R."/>
            <person name="Smirnov S."/>
            <person name="Atnoor D."/>
            <person name="Brown A."/>
            <person name="Allen N."/>
            <person name="Naylor J."/>
            <person name="Stange-Thomann N."/>
            <person name="DeArellano K."/>
            <person name="Johnson R."/>
            <person name="Linton L."/>
            <person name="McEwan P."/>
            <person name="McKernan K."/>
            <person name="Talamas J."/>
            <person name="Tirrell A."/>
            <person name="Ye W."/>
            <person name="Zimmer A."/>
            <person name="Barber R.D."/>
            <person name="Cann I."/>
            <person name="Graham D.E."/>
            <person name="Grahame D.A."/>
            <person name="Guss A.M."/>
            <person name="Hedderich R."/>
            <person name="Ingram-Smith C."/>
            <person name="Kuettner H.C."/>
            <person name="Krzycki J.A."/>
            <person name="Leigh J.A."/>
            <person name="Li W."/>
            <person name="Liu J."/>
            <person name="Mukhopadhyay B."/>
            <person name="Reeve J.N."/>
            <person name="Smith K."/>
            <person name="Springer T.A."/>
            <person name="Umayam L.A."/>
            <person name="White O."/>
            <person name="White R.H."/>
            <person name="de Macario E.C."/>
            <person name="Ferry J.G."/>
            <person name="Jarrell K.F."/>
            <person name="Jing H."/>
            <person name="Macario A.J.L."/>
            <person name="Paulsen I.T."/>
            <person name="Pritchett M."/>
            <person name="Sowers K.R."/>
            <person name="Swanson R.V."/>
            <person name="Zinder S.H."/>
            <person name="Lander E."/>
            <person name="Metcalf W.W."/>
            <person name="Birren B."/>
        </authorList>
    </citation>
    <scope>NUCLEOTIDE SEQUENCE [LARGE SCALE GENOMIC DNA]</scope>
    <source>
        <strain>ATCC 35395 / DSM 2834 / JCM 12185 / C2A</strain>
    </source>
</reference>
<evidence type="ECO:0000250" key="1"/>
<evidence type="ECO:0000305" key="2"/>
<protein>
    <recommendedName>
        <fullName>Pyruvoyl-dependent arginine decarboxylase 1</fullName>
        <shortName>PvlArgDC 1</shortName>
        <ecNumber>4.1.1.19</ecNumber>
    </recommendedName>
    <component>
        <recommendedName>
            <fullName>Pyruvoyl-dependent arginine decarboxylase 1 subunit beta</fullName>
        </recommendedName>
    </component>
    <component>
        <recommendedName>
            <fullName>Pyruvoyl-dependent arginine decarboxylase 1 subunit alpha</fullName>
        </recommendedName>
    </component>
</protein>
<organism>
    <name type="scientific">Methanosarcina acetivorans (strain ATCC 35395 / DSM 2834 / JCM 12185 / C2A)</name>
    <dbReference type="NCBI Taxonomy" id="188937"/>
    <lineage>
        <taxon>Archaea</taxon>
        <taxon>Methanobacteriati</taxon>
        <taxon>Methanobacteriota</taxon>
        <taxon>Stenosarchaea group</taxon>
        <taxon>Methanomicrobia</taxon>
        <taxon>Methanosarcinales</taxon>
        <taxon>Methanosarcinaceae</taxon>
        <taxon>Methanosarcina</taxon>
    </lineage>
</organism>
<gene>
    <name type="primary">pdaD1</name>
    <name type="ordered locus">MA_3012</name>
</gene>
<accession>Q8TLM4</accession>
<sequence>MITKLIPRKVFFTSGVGLHSEKLESFEVSLRDAGIEKFNLVTVSSILPPNCEIVTKEEGLKELSPGEVVFCVMSRISSNEPGKTLSTSVGCALPRDISKHGYISEYHAYEENAQDVGEHAKKLAGSMYSTWTNEAPLKTFSIPRSSSVQESGDWMTVISAAVFII</sequence>